<dbReference type="EC" id="5.4.2.7" evidence="1"/>
<dbReference type="EMBL" id="CP001634">
    <property type="protein sequence ID" value="ACR78774.1"/>
    <property type="molecule type" value="Genomic_DNA"/>
</dbReference>
<dbReference type="RefSeq" id="WP_012744562.1">
    <property type="nucleotide sequence ID" value="NC_012785.1"/>
</dbReference>
<dbReference type="SMR" id="C5CHD5"/>
<dbReference type="STRING" id="521045.Kole_0045"/>
<dbReference type="KEGG" id="kol:Kole_0045"/>
<dbReference type="eggNOG" id="COG1015">
    <property type="taxonomic scope" value="Bacteria"/>
</dbReference>
<dbReference type="HOGENOM" id="CLU_053861_0_0_0"/>
<dbReference type="OrthoDB" id="9769930at2"/>
<dbReference type="UniPathway" id="UPA00002">
    <property type="reaction ID" value="UER00467"/>
</dbReference>
<dbReference type="Proteomes" id="UP000002382">
    <property type="component" value="Chromosome"/>
</dbReference>
<dbReference type="GO" id="GO:0005829">
    <property type="term" value="C:cytosol"/>
    <property type="evidence" value="ECO:0007669"/>
    <property type="project" value="TreeGrafter"/>
</dbReference>
<dbReference type="GO" id="GO:0000287">
    <property type="term" value="F:magnesium ion binding"/>
    <property type="evidence" value="ECO:0007669"/>
    <property type="project" value="InterPro"/>
</dbReference>
<dbReference type="GO" id="GO:0030145">
    <property type="term" value="F:manganese ion binding"/>
    <property type="evidence" value="ECO:0007669"/>
    <property type="project" value="UniProtKB-UniRule"/>
</dbReference>
<dbReference type="GO" id="GO:0008973">
    <property type="term" value="F:phosphopentomutase activity"/>
    <property type="evidence" value="ECO:0007669"/>
    <property type="project" value="UniProtKB-UniRule"/>
</dbReference>
<dbReference type="GO" id="GO:0006018">
    <property type="term" value="P:2-deoxyribose 1-phosphate catabolic process"/>
    <property type="evidence" value="ECO:0007669"/>
    <property type="project" value="UniProtKB-UniRule"/>
</dbReference>
<dbReference type="GO" id="GO:0006015">
    <property type="term" value="P:5-phosphoribose 1-diphosphate biosynthetic process"/>
    <property type="evidence" value="ECO:0007669"/>
    <property type="project" value="UniProtKB-UniPathway"/>
</dbReference>
<dbReference type="GO" id="GO:0043094">
    <property type="term" value="P:metabolic compound salvage"/>
    <property type="evidence" value="ECO:0007669"/>
    <property type="project" value="InterPro"/>
</dbReference>
<dbReference type="GO" id="GO:0009117">
    <property type="term" value="P:nucleotide metabolic process"/>
    <property type="evidence" value="ECO:0007669"/>
    <property type="project" value="InterPro"/>
</dbReference>
<dbReference type="CDD" id="cd16009">
    <property type="entry name" value="PPM"/>
    <property type="match status" value="1"/>
</dbReference>
<dbReference type="FunFam" id="3.30.70.1250:FF:000001">
    <property type="entry name" value="Phosphopentomutase"/>
    <property type="match status" value="1"/>
</dbReference>
<dbReference type="Gene3D" id="3.40.720.10">
    <property type="entry name" value="Alkaline Phosphatase, subunit A"/>
    <property type="match status" value="1"/>
</dbReference>
<dbReference type="Gene3D" id="3.30.70.1250">
    <property type="entry name" value="Phosphopentomutase"/>
    <property type="match status" value="1"/>
</dbReference>
<dbReference type="HAMAP" id="MF_00740">
    <property type="entry name" value="Phosphopentomut"/>
    <property type="match status" value="1"/>
</dbReference>
<dbReference type="InterPro" id="IPR017850">
    <property type="entry name" value="Alkaline_phosphatase_core_sf"/>
</dbReference>
<dbReference type="InterPro" id="IPR010045">
    <property type="entry name" value="DeoB"/>
</dbReference>
<dbReference type="InterPro" id="IPR006124">
    <property type="entry name" value="Metalloenzyme"/>
</dbReference>
<dbReference type="InterPro" id="IPR024052">
    <property type="entry name" value="Phosphopentomutase_DeoB_cap_sf"/>
</dbReference>
<dbReference type="NCBIfam" id="TIGR01696">
    <property type="entry name" value="deoB"/>
    <property type="match status" value="1"/>
</dbReference>
<dbReference type="NCBIfam" id="NF003766">
    <property type="entry name" value="PRK05362.1"/>
    <property type="match status" value="1"/>
</dbReference>
<dbReference type="PANTHER" id="PTHR21110">
    <property type="entry name" value="PHOSPHOPENTOMUTASE"/>
    <property type="match status" value="1"/>
</dbReference>
<dbReference type="PANTHER" id="PTHR21110:SF0">
    <property type="entry name" value="PHOSPHOPENTOMUTASE"/>
    <property type="match status" value="1"/>
</dbReference>
<dbReference type="Pfam" id="PF01676">
    <property type="entry name" value="Metalloenzyme"/>
    <property type="match status" value="1"/>
</dbReference>
<dbReference type="PIRSF" id="PIRSF001491">
    <property type="entry name" value="Ppentomutase"/>
    <property type="match status" value="1"/>
</dbReference>
<dbReference type="SUPFAM" id="SSF53649">
    <property type="entry name" value="Alkaline phosphatase-like"/>
    <property type="match status" value="1"/>
</dbReference>
<dbReference type="SUPFAM" id="SSF143856">
    <property type="entry name" value="DeoB insert domain-like"/>
    <property type="match status" value="1"/>
</dbReference>
<keyword id="KW-0963">Cytoplasm</keyword>
<keyword id="KW-0413">Isomerase</keyword>
<keyword id="KW-0464">Manganese</keyword>
<keyword id="KW-0479">Metal-binding</keyword>
<keyword id="KW-1185">Reference proteome</keyword>
<name>DEOB_KOSOT</name>
<proteinExistence type="inferred from homology"/>
<reference key="1">
    <citation type="submission" date="2009-06" db="EMBL/GenBank/DDBJ databases">
        <title>Complete sequence of Thermotogales bacterium TBF 19.5.1.</title>
        <authorList>
            <consortium name="US DOE Joint Genome Institute"/>
            <person name="Lucas S."/>
            <person name="Copeland A."/>
            <person name="Lapidus A."/>
            <person name="Glavina del Rio T."/>
            <person name="Tice H."/>
            <person name="Bruce D."/>
            <person name="Goodwin L."/>
            <person name="Pitluck S."/>
            <person name="Chertkov O."/>
            <person name="Brettin T."/>
            <person name="Detter J.C."/>
            <person name="Han C."/>
            <person name="Schmutz J."/>
            <person name="Larimer F."/>
            <person name="Land M."/>
            <person name="Hauser L."/>
            <person name="Kyrpides N."/>
            <person name="Ovchinnikova G."/>
            <person name="Noll K."/>
        </authorList>
    </citation>
    <scope>NUCLEOTIDE SEQUENCE [LARGE SCALE GENOMIC DNA]</scope>
    <source>
        <strain>ATCC BAA-1733 / DSM 21960 / TBF 19.5.1</strain>
    </source>
</reference>
<evidence type="ECO:0000255" key="1">
    <source>
        <dbReference type="HAMAP-Rule" id="MF_00740"/>
    </source>
</evidence>
<accession>C5CHD5</accession>
<organism>
    <name type="scientific">Kosmotoga olearia (strain ATCC BAA-1733 / DSM 21960 / TBF 19.5.1)</name>
    <dbReference type="NCBI Taxonomy" id="521045"/>
    <lineage>
        <taxon>Bacteria</taxon>
        <taxon>Thermotogati</taxon>
        <taxon>Thermotogota</taxon>
        <taxon>Thermotogae</taxon>
        <taxon>Kosmotogales</taxon>
        <taxon>Kosmotogaceae</taxon>
        <taxon>Kosmotoga</taxon>
    </lineage>
</organism>
<sequence length="389" mass="43304">MRAIIIVLDSAGIGEMPDAEKYGDKGSNTFGNTAKAVGGLHMPNSQRLGLGNLTDILGVPPTDHALGAYGRMLEKSPGKDTTTGHWEFMGIILEKPFDMFPNGFPPEIIEPFEKETGRKVIGNKPASGTEIIKELGREHEKTGALIVYTSADSVFQIAAHEEIVPVPELYKYCEIARKILNESGYKVARVIARPFIGEWPNYTRTPRRHDYSLPPEGKIALEYLVENGVPVYAVGKINDIYDGHGITEYVKTKDNMDGVDKTLDYIRKVDKGLIFTNLVDFDMKYGHRNNPEGYAKALEEFDARLPEIIGTMRPDDVLFITADHGCDPTTPSTDHSREKVPLLVYGRHVKENVFLGERETFADLGQTILDLFGVEPMENGTSFKKEILD</sequence>
<comment type="function">
    <text evidence="1">Isomerase that catalyzes the conversion of deoxy-ribose 1-phosphate (dRib-1-P) and ribose 1-phosphate (Rib-1-P) to deoxy-ribose 5-phosphate (dRib-5-P) and ribose 5-phosphate (Rib-5-P), respectively.</text>
</comment>
<comment type="catalytic activity">
    <reaction evidence="1">
        <text>2-deoxy-alpha-D-ribose 1-phosphate = 2-deoxy-D-ribose 5-phosphate</text>
        <dbReference type="Rhea" id="RHEA:27658"/>
        <dbReference type="ChEBI" id="CHEBI:57259"/>
        <dbReference type="ChEBI" id="CHEBI:62877"/>
        <dbReference type="EC" id="5.4.2.7"/>
    </reaction>
</comment>
<comment type="catalytic activity">
    <reaction evidence="1">
        <text>alpha-D-ribose 1-phosphate = D-ribose 5-phosphate</text>
        <dbReference type="Rhea" id="RHEA:18793"/>
        <dbReference type="ChEBI" id="CHEBI:57720"/>
        <dbReference type="ChEBI" id="CHEBI:78346"/>
        <dbReference type="EC" id="5.4.2.7"/>
    </reaction>
</comment>
<comment type="cofactor">
    <cofactor evidence="1">
        <name>Mn(2+)</name>
        <dbReference type="ChEBI" id="CHEBI:29035"/>
    </cofactor>
    <text evidence="1">Binds 2 manganese ions.</text>
</comment>
<comment type="pathway">
    <text evidence="1">Carbohydrate degradation; 2-deoxy-D-ribose 1-phosphate degradation; D-glyceraldehyde 3-phosphate and acetaldehyde from 2-deoxy-alpha-D-ribose 1-phosphate: step 1/2.</text>
</comment>
<comment type="subcellular location">
    <subcellularLocation>
        <location evidence="1">Cytoplasm</location>
    </subcellularLocation>
</comment>
<comment type="similarity">
    <text evidence="1">Belongs to the phosphopentomutase family.</text>
</comment>
<protein>
    <recommendedName>
        <fullName evidence="1">Phosphopentomutase</fullName>
        <ecNumber evidence="1">5.4.2.7</ecNumber>
    </recommendedName>
    <alternativeName>
        <fullName evidence="1">Phosphodeoxyribomutase</fullName>
    </alternativeName>
</protein>
<feature type="chain" id="PRO_1000212810" description="Phosphopentomutase">
    <location>
        <begin position="1"/>
        <end position="389"/>
    </location>
</feature>
<feature type="binding site" evidence="1">
    <location>
        <position position="9"/>
    </location>
    <ligand>
        <name>Mn(2+)</name>
        <dbReference type="ChEBI" id="CHEBI:29035"/>
        <label>1</label>
    </ligand>
</feature>
<feature type="binding site" evidence="1">
    <location>
        <position position="282"/>
    </location>
    <ligand>
        <name>Mn(2+)</name>
        <dbReference type="ChEBI" id="CHEBI:29035"/>
        <label>2</label>
    </ligand>
</feature>
<feature type="binding site" evidence="1">
    <location>
        <position position="287"/>
    </location>
    <ligand>
        <name>Mn(2+)</name>
        <dbReference type="ChEBI" id="CHEBI:29035"/>
        <label>2</label>
    </ligand>
</feature>
<feature type="binding site" evidence="1">
    <location>
        <position position="323"/>
    </location>
    <ligand>
        <name>Mn(2+)</name>
        <dbReference type="ChEBI" id="CHEBI:29035"/>
        <label>1</label>
    </ligand>
</feature>
<feature type="binding site" evidence="1">
    <location>
        <position position="324"/>
    </location>
    <ligand>
        <name>Mn(2+)</name>
        <dbReference type="ChEBI" id="CHEBI:29035"/>
        <label>1</label>
    </ligand>
</feature>
<feature type="binding site" evidence="1">
    <location>
        <position position="335"/>
    </location>
    <ligand>
        <name>Mn(2+)</name>
        <dbReference type="ChEBI" id="CHEBI:29035"/>
        <label>2</label>
    </ligand>
</feature>
<gene>
    <name evidence="1" type="primary">deoB</name>
    <name type="ordered locus">Kole_0045</name>
</gene>